<feature type="chain" id="PRO_0000051240" description="Striatin-4">
    <location>
        <begin position="1"/>
        <end position="760"/>
    </location>
</feature>
<feature type="repeat" description="WD 1">
    <location>
        <begin position="443"/>
        <end position="482"/>
    </location>
</feature>
<feature type="repeat" description="WD 2">
    <location>
        <begin position="496"/>
        <end position="535"/>
    </location>
</feature>
<feature type="repeat" description="WD 3">
    <location>
        <begin position="549"/>
        <end position="588"/>
    </location>
</feature>
<feature type="repeat" description="WD 4">
    <location>
        <begin position="595"/>
        <end position="635"/>
    </location>
</feature>
<feature type="repeat" description="WD 5">
    <location>
        <begin position="642"/>
        <end position="681"/>
    </location>
</feature>
<feature type="repeat" description="WD 6">
    <location>
        <begin position="684"/>
        <end position="723"/>
    </location>
</feature>
<feature type="repeat" description="WD 7">
    <location>
        <begin position="730"/>
        <end position="759"/>
    </location>
</feature>
<feature type="region of interest" description="Disordered" evidence="4">
    <location>
        <begin position="1"/>
        <end position="65"/>
    </location>
</feature>
<feature type="region of interest" description="Caveolin-binding" evidence="3">
    <location>
        <begin position="71"/>
        <end position="79"/>
    </location>
</feature>
<feature type="region of interest" description="Calmodulin-binding" evidence="3">
    <location>
        <begin position="165"/>
        <end position="182"/>
    </location>
</feature>
<feature type="region of interest" description="Disordered" evidence="4">
    <location>
        <begin position="210"/>
        <end position="233"/>
    </location>
</feature>
<feature type="region of interest" description="Disordered" evidence="4">
    <location>
        <begin position="272"/>
        <end position="346"/>
    </location>
</feature>
<feature type="coiled-coil region" evidence="3">
    <location>
        <begin position="69"/>
        <end position="136"/>
    </location>
</feature>
<feature type="compositionally biased region" description="Low complexity" evidence="4">
    <location>
        <begin position="7"/>
        <end position="35"/>
    </location>
</feature>
<feature type="compositionally biased region" description="Gly residues" evidence="4">
    <location>
        <begin position="43"/>
        <end position="54"/>
    </location>
</feature>
<feature type="compositionally biased region" description="Acidic residues" evidence="4">
    <location>
        <begin position="272"/>
        <end position="283"/>
    </location>
</feature>
<feature type="compositionally biased region" description="Acidic residues" evidence="4">
    <location>
        <begin position="302"/>
        <end position="317"/>
    </location>
</feature>
<feature type="compositionally biased region" description="Basic and acidic residues" evidence="4">
    <location>
        <begin position="332"/>
        <end position="346"/>
    </location>
</feature>
<feature type="modified residue" description="Phosphoserine" evidence="2">
    <location>
        <position position="53"/>
    </location>
</feature>
<feature type="modified residue" description="Phosphoserine" evidence="7 8 9">
    <location>
        <position position="206"/>
    </location>
</feature>
<feature type="modified residue" description="Phosphoserine" evidence="9">
    <location>
        <position position="223"/>
    </location>
</feature>
<feature type="modified residue" description="Phosphoserine" evidence="9">
    <location>
        <position position="276"/>
    </location>
</feature>
<feature type="splice variant" id="VSP_013815" description="In isoform 2." evidence="5">
    <location>
        <begin position="385"/>
        <end position="391"/>
    </location>
</feature>
<feature type="sequence conflict" description="In Ref. 3; AAH80283." evidence="6" ref="3">
    <original>A</original>
    <variation>P</variation>
    <location>
        <position position="9"/>
    </location>
</feature>
<feature type="sequence conflict" description="In Ref. 1; AAL07439 and 3; AAH04025." evidence="6" ref="1 3">
    <original>D</original>
    <variation>A</variation>
    <location>
        <position position="594"/>
    </location>
</feature>
<proteinExistence type="evidence at protein level"/>
<organism>
    <name type="scientific">Mus musculus</name>
    <name type="common">Mouse</name>
    <dbReference type="NCBI Taxonomy" id="10090"/>
    <lineage>
        <taxon>Eukaryota</taxon>
        <taxon>Metazoa</taxon>
        <taxon>Chordata</taxon>
        <taxon>Craniata</taxon>
        <taxon>Vertebrata</taxon>
        <taxon>Euteleostomi</taxon>
        <taxon>Mammalia</taxon>
        <taxon>Eutheria</taxon>
        <taxon>Euarchontoglires</taxon>
        <taxon>Glires</taxon>
        <taxon>Rodentia</taxon>
        <taxon>Myomorpha</taxon>
        <taxon>Muroidea</taxon>
        <taxon>Muridae</taxon>
        <taxon>Murinae</taxon>
        <taxon>Mus</taxon>
        <taxon>Mus</taxon>
    </lineage>
</organism>
<protein>
    <recommendedName>
        <fullName>Striatin-4</fullName>
    </recommendedName>
    <alternativeName>
        <fullName>Zinedin</fullName>
    </alternativeName>
</protein>
<reference key="1">
    <citation type="journal article" date="2000" name="J. Biol. Chem.">
        <title>Zinedin, SG2NA, and striatin are calmodulin-binding, WD repeat proteins principally expressed in the brain.</title>
        <authorList>
            <person name="Castets F."/>
            <person name="Rakitina T."/>
            <person name="Gaillard S."/>
            <person name="Moqrich A."/>
            <person name="Mattei M.-G."/>
            <person name="Monneron A."/>
        </authorList>
    </citation>
    <scope>NUCLEOTIDE SEQUENCE [MRNA] (ISOFORM 1)</scope>
</reference>
<reference key="2">
    <citation type="journal article" date="2009" name="PLoS Biol.">
        <title>Lineage-specific biology revealed by a finished genome assembly of the mouse.</title>
        <authorList>
            <person name="Church D.M."/>
            <person name="Goodstadt L."/>
            <person name="Hillier L.W."/>
            <person name="Zody M.C."/>
            <person name="Goldstein S."/>
            <person name="She X."/>
            <person name="Bult C.J."/>
            <person name="Agarwala R."/>
            <person name="Cherry J.L."/>
            <person name="DiCuccio M."/>
            <person name="Hlavina W."/>
            <person name="Kapustin Y."/>
            <person name="Meric P."/>
            <person name="Maglott D."/>
            <person name="Birtle Z."/>
            <person name="Marques A.C."/>
            <person name="Graves T."/>
            <person name="Zhou S."/>
            <person name="Teague B."/>
            <person name="Potamousis K."/>
            <person name="Churas C."/>
            <person name="Place M."/>
            <person name="Herschleb J."/>
            <person name="Runnheim R."/>
            <person name="Forrest D."/>
            <person name="Amos-Landgraf J."/>
            <person name="Schwartz D.C."/>
            <person name="Cheng Z."/>
            <person name="Lindblad-Toh K."/>
            <person name="Eichler E.E."/>
            <person name="Ponting C.P."/>
        </authorList>
    </citation>
    <scope>NUCLEOTIDE SEQUENCE [LARGE SCALE GENOMIC DNA]</scope>
    <source>
        <strain>C57BL/6J</strain>
    </source>
</reference>
<reference key="3">
    <citation type="journal article" date="2004" name="Genome Res.">
        <title>The status, quality, and expansion of the NIH full-length cDNA project: the Mammalian Gene Collection (MGC).</title>
        <authorList>
            <consortium name="The MGC Project Team"/>
        </authorList>
    </citation>
    <scope>NUCLEOTIDE SEQUENCE [LARGE SCALE MRNA] (ISOFORMS 1 AND 2)</scope>
    <source>
        <strain>C57BL/6J</strain>
        <strain>Czech II</strain>
        <tissue>Mammary tumor</tissue>
    </source>
</reference>
<reference key="4">
    <citation type="journal article" date="2004" name="Mol. Cell. Proteomics">
        <title>Phosphoproteomic analysis of the developing mouse brain.</title>
        <authorList>
            <person name="Ballif B.A."/>
            <person name="Villen J."/>
            <person name="Beausoleil S.A."/>
            <person name="Schwartz D."/>
            <person name="Gygi S.P."/>
        </authorList>
    </citation>
    <scope>PHOSPHORYLATION [LARGE SCALE ANALYSIS] AT SER-206</scope>
    <scope>IDENTIFICATION BY MASS SPECTROMETRY [LARGE SCALE ANALYSIS]</scope>
    <source>
        <tissue>Embryonic brain</tissue>
    </source>
</reference>
<reference key="5">
    <citation type="journal article" date="2007" name="Proc. Natl. Acad. Sci. U.S.A.">
        <title>Large-scale phosphorylation analysis of mouse liver.</title>
        <authorList>
            <person name="Villen J."/>
            <person name="Beausoleil S.A."/>
            <person name="Gerber S.A."/>
            <person name="Gygi S.P."/>
        </authorList>
    </citation>
    <scope>PHOSPHORYLATION [LARGE SCALE ANALYSIS] AT SER-206</scope>
    <scope>IDENTIFICATION BY MASS SPECTROMETRY [LARGE SCALE ANALYSIS]</scope>
    <source>
        <tissue>Liver</tissue>
    </source>
</reference>
<reference key="6">
    <citation type="journal article" date="2010" name="Cell">
        <title>A tissue-specific atlas of mouse protein phosphorylation and expression.</title>
        <authorList>
            <person name="Huttlin E.L."/>
            <person name="Jedrychowski M.P."/>
            <person name="Elias J.E."/>
            <person name="Goswami T."/>
            <person name="Rad R."/>
            <person name="Beausoleil S.A."/>
            <person name="Villen J."/>
            <person name="Haas W."/>
            <person name="Sowa M.E."/>
            <person name="Gygi S.P."/>
        </authorList>
    </citation>
    <scope>PHOSPHORYLATION [LARGE SCALE ANALYSIS] AT SER-206; SER-223 AND SER-276</scope>
    <scope>IDENTIFICATION BY MASS SPECTROMETRY [LARGE SCALE ANALYSIS]</scope>
    <source>
        <tissue>Brain</tissue>
        <tissue>Brown adipose tissue</tissue>
        <tissue>Heart</tissue>
        <tissue>Kidney</tissue>
        <tissue>Liver</tissue>
        <tissue>Lung</tissue>
        <tissue>Pancreas</tissue>
        <tissue>Spleen</tissue>
        <tissue>Testis</tissue>
    </source>
</reference>
<evidence type="ECO:0000250" key="1"/>
<evidence type="ECO:0000250" key="2">
    <source>
        <dbReference type="UniProtKB" id="Q9NRL3"/>
    </source>
</evidence>
<evidence type="ECO:0000255" key="3"/>
<evidence type="ECO:0000256" key="4">
    <source>
        <dbReference type="SAM" id="MobiDB-lite"/>
    </source>
</evidence>
<evidence type="ECO:0000303" key="5">
    <source>
    </source>
</evidence>
<evidence type="ECO:0000305" key="6"/>
<evidence type="ECO:0007744" key="7">
    <source>
    </source>
</evidence>
<evidence type="ECO:0007744" key="8">
    <source>
    </source>
</evidence>
<evidence type="ECO:0007744" key="9">
    <source>
    </source>
</evidence>
<comment type="function">
    <text evidence="2">Calmodulin-binding scaffolding protein which is the center of the striatin-interacting phosphatase and kinase (STRIPAK) complexes. STRIPAK complexes have critical roles in protein (de)phosphorylation and are regulators of multiple signaling pathways including Hippo, MAPK, nuclear receptor and cytoskeleton remodeling. Different types of STRIPAK complexes are involved in a variety of biological processes such as cell growth, differentiation, apoptosis, metabolism and immune regulation. Key regulator of the expanded Hippo signaling pathway by interacting and allowing the inhibition of MAP4K kinases by the STRIPAK complex.</text>
</comment>
<comment type="subunit">
    <text evidence="2">Part of the core of STRIPAK complexes composed of PP2A catalytic and scaffolding subunits, the striatins (PP2A regulatory subunits), the striatin-associated proteins MOB4, STRIP1 and STRIP2, PDCD10 and members of the STE20 kinases, such as STK24 and STK26. Interacts with CTTNBP2NL.</text>
</comment>
<comment type="subcellular location">
    <subcellularLocation>
        <location>Cytoplasm</location>
    </subcellularLocation>
    <subcellularLocation>
        <location>Membrane</location>
        <topology>Peripheral membrane protein</topology>
    </subcellularLocation>
    <subcellularLocation>
        <location evidence="1">Cell projection</location>
        <location evidence="1">Dendritic spine</location>
    </subcellularLocation>
    <text evidence="1">CTTNBP2-binding may regulate dendritic spine distribution.</text>
</comment>
<comment type="alternative products">
    <event type="alternative splicing"/>
    <isoform>
        <id>P58404-1</id>
        <name>1</name>
        <sequence type="displayed"/>
    </isoform>
    <isoform>
        <id>P58404-2</id>
        <name>2</name>
        <sequence type="described" ref="VSP_013815"/>
    </isoform>
</comment>
<comment type="tissue specificity">
    <text>Mainly expressed in brain but is also expressed at low levels in the kidney.</text>
</comment>
<comment type="miscellaneous">
    <text>The name 'Zinedin' probably originates from the name of the famous soccer player from Marseille (Zinedine Zidane).</text>
</comment>
<comment type="similarity">
    <text evidence="6">Belongs to the WD repeat striatin family.</text>
</comment>
<dbReference type="EMBL" id="AF414080">
    <property type="protein sequence ID" value="AAL07439.1"/>
    <property type="molecule type" value="mRNA"/>
</dbReference>
<dbReference type="EMBL" id="AC148981">
    <property type="status" value="NOT_ANNOTATED_CDS"/>
    <property type="molecule type" value="Genomic_DNA"/>
</dbReference>
<dbReference type="EMBL" id="BC004025">
    <property type="protein sequence ID" value="AAH04025.1"/>
    <property type="molecule type" value="mRNA"/>
</dbReference>
<dbReference type="EMBL" id="BC080283">
    <property type="protein sequence ID" value="AAH80283.1"/>
    <property type="molecule type" value="mRNA"/>
</dbReference>
<dbReference type="CCDS" id="CCDS39786.1">
    <molecule id="P58404-1"/>
</dbReference>
<dbReference type="CCDS" id="CCDS39787.1">
    <molecule id="P58404-2"/>
</dbReference>
<dbReference type="RefSeq" id="NP_001034967.1">
    <molecule id="P58404-2"/>
    <property type="nucleotide sequence ID" value="NM_001039878.2"/>
</dbReference>
<dbReference type="RefSeq" id="NP_598550.2">
    <molecule id="P58404-1"/>
    <property type="nucleotide sequence ID" value="NM_133789.3"/>
</dbReference>
<dbReference type="SMR" id="P58404"/>
<dbReference type="BioGRID" id="220713">
    <property type="interactions" value="6"/>
</dbReference>
<dbReference type="FunCoup" id="P58404">
    <property type="interactions" value="547"/>
</dbReference>
<dbReference type="IntAct" id="P58404">
    <property type="interactions" value="1"/>
</dbReference>
<dbReference type="STRING" id="10090.ENSMUSP00000019220"/>
<dbReference type="GlyGen" id="P58404">
    <property type="glycosylation" value="1 site"/>
</dbReference>
<dbReference type="iPTMnet" id="P58404"/>
<dbReference type="PhosphoSitePlus" id="P58404"/>
<dbReference type="SwissPalm" id="P58404"/>
<dbReference type="jPOST" id="P58404"/>
<dbReference type="PaxDb" id="10090-ENSMUSP00000019220"/>
<dbReference type="PeptideAtlas" id="P58404"/>
<dbReference type="ProteomicsDB" id="257465">
    <molecule id="P58404-1"/>
</dbReference>
<dbReference type="ProteomicsDB" id="257466">
    <molecule id="P58404-2"/>
</dbReference>
<dbReference type="Pumba" id="P58404"/>
<dbReference type="Antibodypedia" id="49367">
    <property type="antibodies" value="179 antibodies from 25 providers"/>
</dbReference>
<dbReference type="DNASU" id="97387"/>
<dbReference type="Ensembl" id="ENSMUST00000019220.16">
    <molecule id="P58404-1"/>
    <property type="protein sequence ID" value="ENSMUSP00000019220.9"/>
    <property type="gene ID" value="ENSMUSG00000030374.16"/>
</dbReference>
<dbReference type="Ensembl" id="ENSMUST00000108495.9">
    <molecule id="P58404-2"/>
    <property type="protein sequence ID" value="ENSMUSP00000104135.2"/>
    <property type="gene ID" value="ENSMUSG00000030374.16"/>
</dbReference>
<dbReference type="GeneID" id="97387"/>
<dbReference type="KEGG" id="mmu:97387"/>
<dbReference type="UCSC" id="uc009fie.2">
    <molecule id="P58404-2"/>
    <property type="organism name" value="mouse"/>
</dbReference>
<dbReference type="UCSC" id="uc009fif.2">
    <molecule id="P58404-1"/>
    <property type="organism name" value="mouse"/>
</dbReference>
<dbReference type="AGR" id="MGI:2142346"/>
<dbReference type="CTD" id="29888"/>
<dbReference type="MGI" id="MGI:2142346">
    <property type="gene designation" value="Strn4"/>
</dbReference>
<dbReference type="VEuPathDB" id="HostDB:ENSMUSG00000030374"/>
<dbReference type="eggNOG" id="KOG0642">
    <property type="taxonomic scope" value="Eukaryota"/>
</dbReference>
<dbReference type="GeneTree" id="ENSGT00950000183095"/>
<dbReference type="HOGENOM" id="CLU_009108_2_0_1"/>
<dbReference type="InParanoid" id="P58404"/>
<dbReference type="OMA" id="RCSMELN"/>
<dbReference type="OrthoDB" id="727118at2759"/>
<dbReference type="PhylomeDB" id="P58404"/>
<dbReference type="TreeFam" id="TF313387"/>
<dbReference type="BioGRID-ORCS" id="97387">
    <property type="hits" value="3 hits in 78 CRISPR screens"/>
</dbReference>
<dbReference type="CD-CODE" id="CE726F99">
    <property type="entry name" value="Postsynaptic density"/>
</dbReference>
<dbReference type="ChiTaRS" id="Strn4">
    <property type="organism name" value="mouse"/>
</dbReference>
<dbReference type="PRO" id="PR:P58404"/>
<dbReference type="Proteomes" id="UP000000589">
    <property type="component" value="Chromosome 7"/>
</dbReference>
<dbReference type="RNAct" id="P58404">
    <property type="molecule type" value="protein"/>
</dbReference>
<dbReference type="Bgee" id="ENSMUSG00000030374">
    <property type="expression patterns" value="Expressed in spermatocyte and 259 other cell types or tissues"/>
</dbReference>
<dbReference type="ExpressionAtlas" id="P58404">
    <property type="expression patterns" value="baseline and differential"/>
</dbReference>
<dbReference type="GO" id="GO:0005737">
    <property type="term" value="C:cytoplasm"/>
    <property type="evidence" value="ECO:0007669"/>
    <property type="project" value="UniProtKB-SubCell"/>
</dbReference>
<dbReference type="GO" id="GO:0043197">
    <property type="term" value="C:dendritic spine"/>
    <property type="evidence" value="ECO:0007669"/>
    <property type="project" value="UniProtKB-SubCell"/>
</dbReference>
<dbReference type="GO" id="GO:0090443">
    <property type="term" value="C:FAR/SIN/STRIPAK complex"/>
    <property type="evidence" value="ECO:0000250"/>
    <property type="project" value="UniProtKB"/>
</dbReference>
<dbReference type="GO" id="GO:0098982">
    <property type="term" value="C:GABA-ergic synapse"/>
    <property type="evidence" value="ECO:0007669"/>
    <property type="project" value="Ensembl"/>
</dbReference>
<dbReference type="GO" id="GO:0098978">
    <property type="term" value="C:glutamatergic synapse"/>
    <property type="evidence" value="ECO:0007669"/>
    <property type="project" value="Ensembl"/>
</dbReference>
<dbReference type="GO" id="GO:0016020">
    <property type="term" value="C:membrane"/>
    <property type="evidence" value="ECO:0007669"/>
    <property type="project" value="UniProtKB-SubCell"/>
</dbReference>
<dbReference type="GO" id="GO:0070016">
    <property type="term" value="F:armadillo repeat domain binding"/>
    <property type="evidence" value="ECO:0007669"/>
    <property type="project" value="Ensembl"/>
</dbReference>
<dbReference type="GO" id="GO:0005516">
    <property type="term" value="F:calmodulin binding"/>
    <property type="evidence" value="ECO:0007669"/>
    <property type="project" value="UniProtKB-KW"/>
</dbReference>
<dbReference type="GO" id="GO:0051721">
    <property type="term" value="F:protein phosphatase 2A binding"/>
    <property type="evidence" value="ECO:0007669"/>
    <property type="project" value="Ensembl"/>
</dbReference>
<dbReference type="GO" id="GO:0044877">
    <property type="term" value="F:protein-containing complex binding"/>
    <property type="evidence" value="ECO:0007669"/>
    <property type="project" value="Ensembl"/>
</dbReference>
<dbReference type="GO" id="GO:0030674">
    <property type="term" value="F:protein-macromolecule adaptor activity"/>
    <property type="evidence" value="ECO:0000250"/>
    <property type="project" value="UniProtKB"/>
</dbReference>
<dbReference type="GO" id="GO:0035331">
    <property type="term" value="P:negative regulation of hippo signaling"/>
    <property type="evidence" value="ECO:0007669"/>
    <property type="project" value="Ensembl"/>
</dbReference>
<dbReference type="GO" id="GO:0099159">
    <property type="term" value="P:regulation of modification of postsynaptic structure"/>
    <property type="evidence" value="ECO:0007669"/>
    <property type="project" value="Ensembl"/>
</dbReference>
<dbReference type="CDD" id="cd00200">
    <property type="entry name" value="WD40"/>
    <property type="match status" value="1"/>
</dbReference>
<dbReference type="FunFam" id="1.20.5.300:FF:000001">
    <property type="entry name" value="striatin isoform X1"/>
    <property type="match status" value="1"/>
</dbReference>
<dbReference type="FunFam" id="2.130.10.10:FF:000246">
    <property type="entry name" value="striatin-4 isoform X1"/>
    <property type="match status" value="1"/>
</dbReference>
<dbReference type="FunFam" id="2.130.10.10:FF:000317">
    <property type="entry name" value="striatin-4 isoform X2"/>
    <property type="match status" value="1"/>
</dbReference>
<dbReference type="FunFam" id="2.130.10.10:FF:000756">
    <property type="entry name" value="striatin-4 isoform X2"/>
    <property type="match status" value="1"/>
</dbReference>
<dbReference type="Gene3D" id="1.20.5.300">
    <property type="match status" value="1"/>
</dbReference>
<dbReference type="Gene3D" id="2.130.10.10">
    <property type="entry name" value="YVTN repeat-like/Quinoprotein amine dehydrogenase"/>
    <property type="match status" value="3"/>
</dbReference>
<dbReference type="InterPro" id="IPR020472">
    <property type="entry name" value="G-protein_beta_WD-40_rep"/>
</dbReference>
<dbReference type="InterPro" id="IPR013258">
    <property type="entry name" value="Striatin_N"/>
</dbReference>
<dbReference type="InterPro" id="IPR015943">
    <property type="entry name" value="WD40/YVTN_repeat-like_dom_sf"/>
</dbReference>
<dbReference type="InterPro" id="IPR019775">
    <property type="entry name" value="WD40_repeat_CS"/>
</dbReference>
<dbReference type="InterPro" id="IPR036322">
    <property type="entry name" value="WD40_repeat_dom_sf"/>
</dbReference>
<dbReference type="InterPro" id="IPR001680">
    <property type="entry name" value="WD40_rpt"/>
</dbReference>
<dbReference type="InterPro" id="IPR051488">
    <property type="entry name" value="WD_repeat_striatin"/>
</dbReference>
<dbReference type="PANTHER" id="PTHR15653">
    <property type="entry name" value="STRIATIN"/>
    <property type="match status" value="1"/>
</dbReference>
<dbReference type="PANTHER" id="PTHR15653:SF1">
    <property type="entry name" value="STRIATIN-4"/>
    <property type="match status" value="1"/>
</dbReference>
<dbReference type="Pfam" id="PF08232">
    <property type="entry name" value="Striatin"/>
    <property type="match status" value="1"/>
</dbReference>
<dbReference type="Pfam" id="PF00400">
    <property type="entry name" value="WD40"/>
    <property type="match status" value="5"/>
</dbReference>
<dbReference type="PRINTS" id="PR00320">
    <property type="entry name" value="GPROTEINBRPT"/>
</dbReference>
<dbReference type="SMART" id="SM00320">
    <property type="entry name" value="WD40"/>
    <property type="match status" value="7"/>
</dbReference>
<dbReference type="SUPFAM" id="SSF50978">
    <property type="entry name" value="WD40 repeat-like"/>
    <property type="match status" value="1"/>
</dbReference>
<dbReference type="PROSITE" id="PS00678">
    <property type="entry name" value="WD_REPEATS_1"/>
    <property type="match status" value="1"/>
</dbReference>
<dbReference type="PROSITE" id="PS50082">
    <property type="entry name" value="WD_REPEATS_2"/>
    <property type="match status" value="4"/>
</dbReference>
<dbReference type="PROSITE" id="PS50294">
    <property type="entry name" value="WD_REPEATS_REGION"/>
    <property type="match status" value="1"/>
</dbReference>
<sequence>MMEERAAAAVASAASSCRPLGSGTAPNPTAAAPASSPAPGPGPVGKGGGGGGSPGPTAGPEPLSLPGILHFIQHEWARFEAEKARWEAERAELQAQVAFLQGERKGQENLKTDLVRRIKMLEYALKQERAKYHKLKFGTDLNQGEKKTDLSEQVSNGPVESVTLENSPLVWKEGRQLLRQYLEEVGYTDTILDMRSKRVRSLLGRSLELNGAGEPVEGAPRASPGPGGLSGGESLLVKQIEEQIKRNAAGKDGKERLGGSVLEQIPFLQNCEDEDSDEDDELDSVQHKKQRVRLPSKALVPEMEDEDEEDDSEDAINEFDFLGSGEDGEGSPDPRRCTSEGNPHELESRRVKLQGILADLRDVDGLPPKVTVPPPGTPQPRPHEGSFGFSSDVFIMDTIGGGEVSLGDLADLTVTNDNDLSCDLSDSKDAFKKTWNPKFTLRSHYDGIRSLAFHHSQSALLTASEDGTLKLWNLQKAVTAKKNAALDVEPIHAFRAHRGPVLAVTMGSNSEYCYSGGADARIHSWKIPDLNMDPYDGYDPSVLSHVLEGHGDAVWGLAFSPTSQRLASCSADGTVRIWDPSSSGPSCLCTFPMDGEHGIPTSVAFTSTEPAHVVASFRSGDTVLYDLEAGSALLTLESRGSSGPAQINQVVSHPSQPLTITAHDDRGIRFLDNRTGKSVHSMVAHLDAVTCLAVDPNGVFLMSGSHDCSLRLWSLDNKTCVQEITAHRKKHEEAIHAVACHPSKALIASAGADALAKVFV</sequence>
<accession>P58404</accession>
<accession>E9QKX6</accession>
<accession>Q68EF5</accession>
<name>STRN4_MOUSE</name>
<gene>
    <name type="primary">Strn4</name>
    <name type="synonym">Zin</name>
</gene>
<keyword id="KW-0025">Alternative splicing</keyword>
<keyword id="KW-0112">Calmodulin-binding</keyword>
<keyword id="KW-0966">Cell projection</keyword>
<keyword id="KW-0175">Coiled coil</keyword>
<keyword id="KW-0963">Cytoplasm</keyword>
<keyword id="KW-0472">Membrane</keyword>
<keyword id="KW-0597">Phosphoprotein</keyword>
<keyword id="KW-1185">Reference proteome</keyword>
<keyword id="KW-0677">Repeat</keyword>
<keyword id="KW-0770">Synapse</keyword>
<keyword id="KW-0853">WD repeat</keyword>